<reference key="1">
    <citation type="journal article" date="2005" name="Nature">
        <title>The map-based sequence of the rice genome.</title>
        <authorList>
            <consortium name="International rice genome sequencing project (IRGSP)"/>
        </authorList>
    </citation>
    <scope>NUCLEOTIDE SEQUENCE [LARGE SCALE GENOMIC DNA]</scope>
    <source>
        <strain>cv. Nipponbare</strain>
    </source>
</reference>
<reference key="2">
    <citation type="journal article" date="2008" name="Nucleic Acids Res.">
        <title>The rice annotation project database (RAP-DB): 2008 update.</title>
        <authorList>
            <consortium name="The rice annotation project (RAP)"/>
        </authorList>
    </citation>
    <scope>GENOME REANNOTATION</scope>
    <source>
        <strain>cv. Nipponbare</strain>
    </source>
</reference>
<reference key="3">
    <citation type="journal article" date="2013" name="Rice">
        <title>Improvement of the Oryza sativa Nipponbare reference genome using next generation sequence and optical map data.</title>
        <authorList>
            <person name="Kawahara Y."/>
            <person name="de la Bastide M."/>
            <person name="Hamilton J.P."/>
            <person name="Kanamori H."/>
            <person name="McCombie W.R."/>
            <person name="Ouyang S."/>
            <person name="Schwartz D.C."/>
            <person name="Tanaka T."/>
            <person name="Wu J."/>
            <person name="Zhou S."/>
            <person name="Childs K.L."/>
            <person name="Davidson R.M."/>
            <person name="Lin H."/>
            <person name="Quesada-Ocampo L."/>
            <person name="Vaillancourt B."/>
            <person name="Sakai H."/>
            <person name="Lee S.S."/>
            <person name="Kim J."/>
            <person name="Numa H."/>
            <person name="Itoh T."/>
            <person name="Buell C.R."/>
            <person name="Matsumoto T."/>
        </authorList>
    </citation>
    <scope>GENOME REANNOTATION</scope>
    <source>
        <strain>cv. Nipponbare</strain>
    </source>
</reference>
<dbReference type="EC" id="2.3.1.20" evidence="5"/>
<dbReference type="EMBL" id="AP003714">
    <property type="protein sequence ID" value="BAD53762.1"/>
    <property type="status" value="ALT_SEQ"/>
    <property type="molecule type" value="Genomic_DNA"/>
</dbReference>
<dbReference type="EMBL" id="AP008212">
    <property type="protein sequence ID" value="BAF19794.2"/>
    <property type="status" value="ALT_SEQ"/>
    <property type="molecule type" value="Genomic_DNA"/>
</dbReference>
<dbReference type="EMBL" id="AP014962">
    <property type="protein sequence ID" value="BAS98267.1"/>
    <property type="molecule type" value="Genomic_DNA"/>
</dbReference>
<dbReference type="RefSeq" id="XP_015641041.1">
    <property type="nucleotide sequence ID" value="XM_015785555.1"/>
</dbReference>
<dbReference type="SMR" id="A0A0P0WY03"/>
<dbReference type="FunCoup" id="A0A0P0WY03">
    <property type="interactions" value="1104"/>
</dbReference>
<dbReference type="STRING" id="39947.A0A0P0WY03"/>
<dbReference type="PaxDb" id="39947-A0A0P0WY03"/>
<dbReference type="EnsemblPlants" id="Os06t0563900-01">
    <property type="protein sequence ID" value="Os06t0563900-01"/>
    <property type="gene ID" value="Os06g0563900"/>
</dbReference>
<dbReference type="Gramene" id="Os06t0563900-01">
    <property type="protein sequence ID" value="Os06t0563900-01"/>
    <property type="gene ID" value="Os06g0563900"/>
</dbReference>
<dbReference type="KEGG" id="dosa:Os06g0563900"/>
<dbReference type="eggNOG" id="KOG0380">
    <property type="taxonomic scope" value="Eukaryota"/>
</dbReference>
<dbReference type="InParanoid" id="A0A0P0WY03"/>
<dbReference type="OMA" id="RCHDYRR"/>
<dbReference type="OrthoDB" id="10039049at2759"/>
<dbReference type="UniPathway" id="UPA00282"/>
<dbReference type="Proteomes" id="UP000000763">
    <property type="component" value="Chromosome 6"/>
</dbReference>
<dbReference type="Proteomes" id="UP000059680">
    <property type="component" value="Chromosome 6"/>
</dbReference>
<dbReference type="GO" id="GO:0009941">
    <property type="term" value="C:chloroplast envelope"/>
    <property type="evidence" value="ECO:0000318"/>
    <property type="project" value="GO_Central"/>
</dbReference>
<dbReference type="GO" id="GO:0005789">
    <property type="term" value="C:endoplasmic reticulum membrane"/>
    <property type="evidence" value="ECO:0000250"/>
    <property type="project" value="UniProtKB"/>
</dbReference>
<dbReference type="GO" id="GO:0004144">
    <property type="term" value="F:diacylglycerol O-acyltransferase activity"/>
    <property type="evidence" value="ECO:0000250"/>
    <property type="project" value="UniProtKB"/>
</dbReference>
<dbReference type="GO" id="GO:0006071">
    <property type="term" value="P:glycerol metabolic process"/>
    <property type="evidence" value="ECO:0007669"/>
    <property type="project" value="UniProtKB-KW"/>
</dbReference>
<dbReference type="GO" id="GO:0019432">
    <property type="term" value="P:triglyceride biosynthetic process"/>
    <property type="evidence" value="ECO:0000250"/>
    <property type="project" value="UniProtKB"/>
</dbReference>
<dbReference type="InterPro" id="IPR027251">
    <property type="entry name" value="Diacylglycerol_acylTrfase1"/>
</dbReference>
<dbReference type="InterPro" id="IPR004299">
    <property type="entry name" value="MBOAT_fam"/>
</dbReference>
<dbReference type="InterPro" id="IPR014371">
    <property type="entry name" value="Oat_ACAT_DAG_ARE"/>
</dbReference>
<dbReference type="PANTHER" id="PTHR10408:SF7">
    <property type="entry name" value="DIACYLGLYCEROL O-ACYLTRANSFERASE 1"/>
    <property type="match status" value="1"/>
</dbReference>
<dbReference type="PANTHER" id="PTHR10408">
    <property type="entry name" value="STEROL O-ACYLTRANSFERASE"/>
    <property type="match status" value="1"/>
</dbReference>
<dbReference type="Pfam" id="PF03062">
    <property type="entry name" value="MBOAT"/>
    <property type="match status" value="1"/>
</dbReference>
<dbReference type="PIRSF" id="PIRSF000439">
    <property type="entry name" value="Oat_ACAT_DAG_ARE"/>
    <property type="match status" value="1"/>
</dbReference>
<dbReference type="PIRSF" id="PIRSF500231">
    <property type="entry name" value="Oat_dag"/>
    <property type="match status" value="1"/>
</dbReference>
<keyword id="KW-0012">Acyltransferase</keyword>
<keyword id="KW-0256">Endoplasmic reticulum</keyword>
<keyword id="KW-0319">Glycerol metabolism</keyword>
<keyword id="KW-0444">Lipid biosynthesis</keyword>
<keyword id="KW-0443">Lipid metabolism</keyword>
<keyword id="KW-0472">Membrane</keyword>
<keyword id="KW-1185">Reference proteome</keyword>
<keyword id="KW-0808">Transferase</keyword>
<keyword id="KW-0812">Transmembrane</keyword>
<keyword id="KW-1133">Transmembrane helix</keyword>
<sequence>MAPPPSLAPDRGGGEPDDALRLRARAAAAAGDAPAPQQQQEQRHQEQQQQLLWYRASAPAHRRVRESPLSSDAIFRQSHAGLLNLCIVVLVAVNSRLIIENLMKYGLLIRAGFWFSGTSLADWPLLMCCLTLPTFPLAALMVEKLAQRKLISKHVVILLHIVITTSVLVYPVVVILKCDSAVLSGFVLMFLASIIWLKLVSFAHTNYDIRMLSKSIEKGVTHDISIDPENIKWPTFKRLSYFMLAPTLCYQPSYPRTTYIRKGWVVRQLIKCLVFTGLMGFIIEQYINPIVKNSKHPLKGNFLNAIERVLKLSVPTLYVWLCMFYCFFHLWLNILAELLCFGDREFYKDWWNAKTVEEYWRMWNMPVHKWVIRHIYFPCIRNGFSKGVAILISFLVSAAFHELCVAVPCHIFKFWAFIGIMFQIPLVFLTKYLQDKFNNTMVGNMIFWFFFSILGQPMCVLLYYHDVMNRQQAQTNR</sequence>
<comment type="function">
    <text evidence="2">Involved in triacylglycerol (TAG) synthesis. Catalyzes the acylation of the sn-3 hydroxy group of sn-1,2-diacylglycerol using acyl-CoA.</text>
</comment>
<comment type="catalytic activity">
    <reaction evidence="5">
        <text>an acyl-CoA + a 1,2-diacyl-sn-glycerol = a triacyl-sn-glycerol + CoA</text>
        <dbReference type="Rhea" id="RHEA:10868"/>
        <dbReference type="ChEBI" id="CHEBI:17815"/>
        <dbReference type="ChEBI" id="CHEBI:57287"/>
        <dbReference type="ChEBI" id="CHEBI:58342"/>
        <dbReference type="ChEBI" id="CHEBI:64615"/>
        <dbReference type="EC" id="2.3.1.20"/>
    </reaction>
</comment>
<comment type="pathway">
    <text evidence="5">Glycerolipid metabolism; triacylglycerol biosynthesis.</text>
</comment>
<comment type="subcellular location">
    <subcellularLocation>
        <location evidence="2">Endoplasmic reticulum membrane</location>
        <topology evidence="3">Multi-pass membrane protein</topology>
    </subcellularLocation>
</comment>
<comment type="similarity">
    <text evidence="5">Belongs to the membrane-bound acyltransferase family. Sterol o-acyltransferase subfamily.</text>
</comment>
<comment type="sequence caution" evidence="5">
    <conflict type="erroneous gene model prediction">
        <sequence resource="EMBL-CDS" id="BAD53762"/>
    </conflict>
</comment>
<comment type="sequence caution" evidence="5">
    <conflict type="erroneous gene model prediction">
        <sequence resource="EMBL-CDS" id="BAF19794"/>
    </conflict>
</comment>
<organism>
    <name type="scientific">Oryza sativa subsp. japonica</name>
    <name type="common">Rice</name>
    <dbReference type="NCBI Taxonomy" id="39947"/>
    <lineage>
        <taxon>Eukaryota</taxon>
        <taxon>Viridiplantae</taxon>
        <taxon>Streptophyta</taxon>
        <taxon>Embryophyta</taxon>
        <taxon>Tracheophyta</taxon>
        <taxon>Spermatophyta</taxon>
        <taxon>Magnoliopsida</taxon>
        <taxon>Liliopsida</taxon>
        <taxon>Poales</taxon>
        <taxon>Poaceae</taxon>
        <taxon>BOP clade</taxon>
        <taxon>Oryzoideae</taxon>
        <taxon>Oryzeae</taxon>
        <taxon>Oryzinae</taxon>
        <taxon>Oryza</taxon>
        <taxon>Oryza sativa</taxon>
    </lineage>
</organism>
<name>DAT12_ORYSJ</name>
<protein>
    <recommendedName>
        <fullName evidence="5">Diacylglycerol O-acyltransferase 1-2</fullName>
        <shortName evidence="5">OsDGAT1-2</shortName>
        <ecNumber evidence="5">2.3.1.20</ecNumber>
    </recommendedName>
</protein>
<feature type="chain" id="PRO_0000438910" description="Diacylglycerol O-acyltransferase 1-2">
    <location>
        <begin position="1"/>
        <end position="477"/>
    </location>
</feature>
<feature type="transmembrane region" description="Helical" evidence="3">
    <location>
        <begin position="79"/>
        <end position="99"/>
    </location>
</feature>
<feature type="transmembrane region" description="Helical" evidence="3">
    <location>
        <begin position="123"/>
        <end position="143"/>
    </location>
</feature>
<feature type="transmembrane region" description="Helical" evidence="3">
    <location>
        <begin position="155"/>
        <end position="175"/>
    </location>
</feature>
<feature type="transmembrane region" description="Helical" evidence="3">
    <location>
        <begin position="182"/>
        <end position="202"/>
    </location>
</feature>
<feature type="transmembrane region" description="Helical" evidence="3">
    <location>
        <begin position="230"/>
        <end position="250"/>
    </location>
</feature>
<feature type="transmembrane region" description="Helical" evidence="3">
    <location>
        <begin position="263"/>
        <end position="283"/>
    </location>
</feature>
<feature type="transmembrane region" description="Helical" evidence="3">
    <location>
        <begin position="319"/>
        <end position="339"/>
    </location>
</feature>
<feature type="transmembrane region" description="Helical" evidence="3">
    <location>
        <begin position="387"/>
        <end position="407"/>
    </location>
</feature>
<feature type="transmembrane region" description="Helical" evidence="3">
    <location>
        <begin position="409"/>
        <end position="429"/>
    </location>
</feature>
<feature type="transmembrane region" description="Helical" evidence="3">
    <location>
        <begin position="442"/>
        <end position="462"/>
    </location>
</feature>
<feature type="region of interest" description="Disordered" evidence="4">
    <location>
        <begin position="1"/>
        <end position="48"/>
    </location>
</feature>
<feature type="short sequence motif" description="FYXDWWN motif" evidence="1">
    <location>
        <begin position="346"/>
        <end position="352"/>
    </location>
</feature>
<feature type="compositionally biased region" description="Basic and acidic residues" evidence="4">
    <location>
        <begin position="12"/>
        <end position="21"/>
    </location>
</feature>
<feature type="compositionally biased region" description="Low complexity" evidence="4">
    <location>
        <begin position="25"/>
        <end position="40"/>
    </location>
</feature>
<feature type="active site" evidence="1">
    <location>
        <position position="401"/>
    </location>
</feature>
<gene>
    <name evidence="5" type="primary">DGAT1-2</name>
    <name evidence="7" type="ordered locus">Os06g0563900</name>
    <name evidence="5" type="ordered locus">LOC_Os06g36800</name>
    <name evidence="6" type="ORF">P0656E03.36</name>
</gene>
<proteinExistence type="inferred from homology"/>
<evidence type="ECO:0000250" key="1">
    <source>
        <dbReference type="UniProtKB" id="O75907"/>
    </source>
</evidence>
<evidence type="ECO:0000250" key="2">
    <source>
        <dbReference type="UniProtKB" id="Q5GKZ7"/>
    </source>
</evidence>
<evidence type="ECO:0000255" key="3"/>
<evidence type="ECO:0000256" key="4">
    <source>
        <dbReference type="SAM" id="MobiDB-lite"/>
    </source>
</evidence>
<evidence type="ECO:0000305" key="5"/>
<evidence type="ECO:0000312" key="6">
    <source>
        <dbReference type="EMBL" id="BAD53762.1"/>
    </source>
</evidence>
<evidence type="ECO:0000312" key="7">
    <source>
        <dbReference type="EMBL" id="BAS98267.1"/>
    </source>
</evidence>
<accession>A0A0P0WY03</accession>
<accession>Q0DBH9</accession>
<accession>Q5Z8Z2</accession>